<gene>
    <name evidence="1" type="primary">pepX</name>
    <name type="ordered locus">SPJ_0835</name>
</gene>
<comment type="function">
    <text evidence="1">Removes N-terminal dipeptides sequentially from polypeptides having unsubstituted N-termini provided that the penultimate residue is proline.</text>
</comment>
<comment type="catalytic activity">
    <reaction evidence="1">
        <text>Hydrolyzes Xaa-Pro-|- bonds to release unblocked, N-terminal dipeptides from substrates including Ala-Pro-|-p-nitroanilide and (sequentially) Tyr-Pro-|-Phe-Pro-|-Gly-Pro-|-Ile.</text>
        <dbReference type="EC" id="3.4.14.11"/>
    </reaction>
</comment>
<comment type="subunit">
    <text evidence="1">Homodimer.</text>
</comment>
<comment type="subcellular location">
    <subcellularLocation>
        <location evidence="1">Cytoplasm</location>
    </subcellularLocation>
</comment>
<comment type="similarity">
    <text evidence="1">Belongs to the peptidase S15 family.</text>
</comment>
<organism>
    <name type="scientific">Streptococcus pneumoniae (strain JJA)</name>
    <dbReference type="NCBI Taxonomy" id="488222"/>
    <lineage>
        <taxon>Bacteria</taxon>
        <taxon>Bacillati</taxon>
        <taxon>Bacillota</taxon>
        <taxon>Bacilli</taxon>
        <taxon>Lactobacillales</taxon>
        <taxon>Streptococcaceae</taxon>
        <taxon>Streptococcus</taxon>
    </lineage>
</organism>
<proteinExistence type="inferred from homology"/>
<evidence type="ECO:0000255" key="1">
    <source>
        <dbReference type="HAMAP-Rule" id="MF_00698"/>
    </source>
</evidence>
<keyword id="KW-0031">Aminopeptidase</keyword>
<keyword id="KW-0963">Cytoplasm</keyword>
<keyword id="KW-0378">Hydrolase</keyword>
<keyword id="KW-0645">Protease</keyword>
<keyword id="KW-0720">Serine protease</keyword>
<name>PEPX_STRZJ</name>
<feature type="chain" id="PRO_1000192759" description="Xaa-Pro dipeptidyl-peptidase">
    <location>
        <begin position="1"/>
        <end position="757"/>
    </location>
</feature>
<feature type="active site" description="Charge relay system" evidence="1">
    <location>
        <position position="348"/>
    </location>
</feature>
<feature type="active site" description="Charge relay system" evidence="1">
    <location>
        <position position="468"/>
    </location>
</feature>
<feature type="active site" description="Charge relay system" evidence="1">
    <location>
        <position position="498"/>
    </location>
</feature>
<sequence>MRFNQYSYINFPKENVLSELKKCGFDLQNTANHKDSLETFLRRFFFTYQDTNYPLSILAADKKTDLLTFFQSEDELTADIFYTVAFQLLGFSYLVDFEDSDVFRKETGFPIIYGDLIENLYQLLNTRTKKGNTLIDQLVSDGLIPEDNDYHYFNGKSLATFSNQDVIREVVYVESRVDTDQKGLSDLVKVSIIRPRFDGKIPAIMTASPYHQGTNDKASDKALYKMEGELEVKLPHKIELEKPQLNLVQPQGKAELIAEAEEKLTHINSSYTLNDYFLPRGFANLYVSGVGTKDSTGFMTNGDYQQIEAYKNVIDWLNGRCRAFTDHTRQRQVKADWSNGKVATTGLSYLGTMSNGLATTGVDGLEVIIAEAGISSWYNYYRENGLVTSPGGYPGEDFDSLAELTYSRNLLAGDYIRGNEAHQADLEKVKAQLDRKTGDYNQFWHDRNYLLNAHKVKAEVVFTHGSQDWNVKPLHVYQMFHALPTHIHKHLFFHNGAHVYMNNWQSIDFRESINALLTKKLLGQETDFQLPTVIWQDNTAPQTWLSLDNFGGQENCETFSLGQEEQAIQNQYPDKDFERYGKTYQTFNTELYQGKANQITINLPVTKDLHLNGRAQLNLRIKSSTNKGLLSAQLLEFGQKKYLQPYPAILSARTIDNGRYHMLENLCELPFRPEAQRVVTKGYLNLQNRNDLLLVEDITADEWMDVQFELQPTIYKLKEGDTLRLVLYTTDFEITIRDNTDYHLTVDLAQSMLTLPC</sequence>
<reference key="1">
    <citation type="journal article" date="2010" name="Genome Biol.">
        <title>Structure and dynamics of the pan-genome of Streptococcus pneumoniae and closely related species.</title>
        <authorList>
            <person name="Donati C."/>
            <person name="Hiller N.L."/>
            <person name="Tettelin H."/>
            <person name="Muzzi A."/>
            <person name="Croucher N.J."/>
            <person name="Angiuoli S.V."/>
            <person name="Oggioni M."/>
            <person name="Dunning Hotopp J.C."/>
            <person name="Hu F.Z."/>
            <person name="Riley D.R."/>
            <person name="Covacci A."/>
            <person name="Mitchell T.J."/>
            <person name="Bentley S.D."/>
            <person name="Kilian M."/>
            <person name="Ehrlich G.D."/>
            <person name="Rappuoli R."/>
            <person name="Moxon E.R."/>
            <person name="Masignani V."/>
        </authorList>
    </citation>
    <scope>NUCLEOTIDE SEQUENCE [LARGE SCALE GENOMIC DNA]</scope>
    <source>
        <strain>JJA</strain>
    </source>
</reference>
<accession>C1CDP2</accession>
<protein>
    <recommendedName>
        <fullName evidence="1">Xaa-Pro dipeptidyl-peptidase</fullName>
        <ecNumber evidence="1">3.4.14.11</ecNumber>
    </recommendedName>
    <alternativeName>
        <fullName evidence="1">X-Pro dipeptidyl-peptidase</fullName>
    </alternativeName>
    <alternativeName>
        <fullName evidence="1">X-prolyl-dipeptidyl aminopeptidase</fullName>
        <shortName evidence="1">X-PDAP</shortName>
    </alternativeName>
</protein>
<dbReference type="EC" id="3.4.14.11" evidence="1"/>
<dbReference type="EMBL" id="CP000919">
    <property type="protein sequence ID" value="ACO19341.1"/>
    <property type="molecule type" value="Genomic_DNA"/>
</dbReference>
<dbReference type="RefSeq" id="WP_001212037.1">
    <property type="nucleotide sequence ID" value="NC_012466.1"/>
</dbReference>
<dbReference type="SMR" id="C1CDP2"/>
<dbReference type="ESTHER" id="strpn-pepx">
    <property type="family name" value="Lactobacillus_peptidase"/>
</dbReference>
<dbReference type="MEROPS" id="S15.001"/>
<dbReference type="KEGG" id="sjj:SPJ_0835"/>
<dbReference type="HOGENOM" id="CLU_011800_0_0_9"/>
<dbReference type="Proteomes" id="UP000002206">
    <property type="component" value="Chromosome"/>
</dbReference>
<dbReference type="GO" id="GO:0005737">
    <property type="term" value="C:cytoplasm"/>
    <property type="evidence" value="ECO:0007669"/>
    <property type="project" value="UniProtKB-SubCell"/>
</dbReference>
<dbReference type="GO" id="GO:0004177">
    <property type="term" value="F:aminopeptidase activity"/>
    <property type="evidence" value="ECO:0007669"/>
    <property type="project" value="UniProtKB-KW"/>
</dbReference>
<dbReference type="GO" id="GO:0008239">
    <property type="term" value="F:dipeptidyl-peptidase activity"/>
    <property type="evidence" value="ECO:0007669"/>
    <property type="project" value="UniProtKB-UniRule"/>
</dbReference>
<dbReference type="GO" id="GO:0008236">
    <property type="term" value="F:serine-type peptidase activity"/>
    <property type="evidence" value="ECO:0007669"/>
    <property type="project" value="UniProtKB-KW"/>
</dbReference>
<dbReference type="GO" id="GO:0006508">
    <property type="term" value="P:proteolysis"/>
    <property type="evidence" value="ECO:0007669"/>
    <property type="project" value="UniProtKB-KW"/>
</dbReference>
<dbReference type="Gene3D" id="1.10.246.70">
    <property type="match status" value="1"/>
</dbReference>
<dbReference type="Gene3D" id="3.40.50.1820">
    <property type="entry name" value="alpha/beta hydrolase"/>
    <property type="match status" value="1"/>
</dbReference>
<dbReference type="Gene3D" id="2.60.120.260">
    <property type="entry name" value="Galactose-binding domain-like"/>
    <property type="match status" value="1"/>
</dbReference>
<dbReference type="HAMAP" id="MF_00698">
    <property type="entry name" value="Aminopeptidase_S15"/>
    <property type="match status" value="1"/>
</dbReference>
<dbReference type="InterPro" id="IPR029058">
    <property type="entry name" value="AB_hydrolase_fold"/>
</dbReference>
<dbReference type="InterPro" id="IPR008979">
    <property type="entry name" value="Galactose-bd-like_sf"/>
</dbReference>
<dbReference type="InterPro" id="IPR008252">
    <property type="entry name" value="Pept_S15_Xpro"/>
</dbReference>
<dbReference type="InterPro" id="IPR015251">
    <property type="entry name" value="PepX_N_dom"/>
</dbReference>
<dbReference type="InterPro" id="IPR036313">
    <property type="entry name" value="PepX_N_dom_sf"/>
</dbReference>
<dbReference type="InterPro" id="IPR000383">
    <property type="entry name" value="Xaa-Pro-like_dom"/>
</dbReference>
<dbReference type="InterPro" id="IPR013736">
    <property type="entry name" value="Xaa-Pro_dipept_C"/>
</dbReference>
<dbReference type="InterPro" id="IPR050585">
    <property type="entry name" value="Xaa-Pro_dipeptidyl-ppase/CocE"/>
</dbReference>
<dbReference type="NCBIfam" id="NF003783">
    <property type="entry name" value="PRK05371.1-4"/>
    <property type="match status" value="1"/>
</dbReference>
<dbReference type="PANTHER" id="PTHR43056:SF10">
    <property type="entry name" value="COCE_NOND FAMILY, PUTATIVE (AFU_ORTHOLOGUE AFUA_7G00600)-RELATED"/>
    <property type="match status" value="1"/>
</dbReference>
<dbReference type="PANTHER" id="PTHR43056">
    <property type="entry name" value="PEPTIDASE S9 PROLYL OLIGOPEPTIDASE"/>
    <property type="match status" value="1"/>
</dbReference>
<dbReference type="Pfam" id="PF02129">
    <property type="entry name" value="Peptidase_S15"/>
    <property type="match status" value="1"/>
</dbReference>
<dbReference type="Pfam" id="PF08530">
    <property type="entry name" value="PepX_C"/>
    <property type="match status" value="1"/>
</dbReference>
<dbReference type="Pfam" id="PF09168">
    <property type="entry name" value="PepX_N"/>
    <property type="match status" value="1"/>
</dbReference>
<dbReference type="PRINTS" id="PR00923">
    <property type="entry name" value="LACTOPTASE"/>
</dbReference>
<dbReference type="SMART" id="SM00939">
    <property type="entry name" value="PepX_C"/>
    <property type="match status" value="1"/>
</dbReference>
<dbReference type="SMART" id="SM00940">
    <property type="entry name" value="PepX_N"/>
    <property type="match status" value="1"/>
</dbReference>
<dbReference type="SUPFAM" id="SSF53474">
    <property type="entry name" value="alpha/beta-Hydrolases"/>
    <property type="match status" value="1"/>
</dbReference>
<dbReference type="SUPFAM" id="SSF49785">
    <property type="entry name" value="Galactose-binding domain-like"/>
    <property type="match status" value="1"/>
</dbReference>
<dbReference type="SUPFAM" id="SSF81761">
    <property type="entry name" value="X-Prolyl dipeptidyl aminopeptidase PepX, N-terminal domain"/>
    <property type="match status" value="1"/>
</dbReference>